<evidence type="ECO:0000250" key="1"/>
<evidence type="ECO:0000255" key="2"/>
<evidence type="ECO:0000305" key="3"/>
<reference key="1">
    <citation type="journal article" date="2008" name="Cell. Mol. Life Sci.">
        <title>Molecular diversity and evolution of cystine knot toxins of the tarantula Chilobrachys jingzhao.</title>
        <authorList>
            <person name="Chen J."/>
            <person name="Deng M."/>
            <person name="He Q."/>
            <person name="Meng E."/>
            <person name="Jiang L."/>
            <person name="Liao Z."/>
            <person name="Rong M."/>
            <person name="Liang S."/>
        </authorList>
    </citation>
    <scope>NUCLEOTIDE SEQUENCE [LARGE SCALE MRNA]</scope>
    <source>
        <tissue>Venom gland</tissue>
    </source>
</reference>
<dbReference type="EMBL" id="EU233852">
    <property type="protein sequence ID" value="ABY71671.1"/>
    <property type="molecule type" value="mRNA"/>
</dbReference>
<dbReference type="SMR" id="B1P1C1"/>
<dbReference type="ArachnoServer" id="AS000800">
    <property type="toxin name" value="U8-theraphotoxin-Cg1a"/>
</dbReference>
<dbReference type="GO" id="GO:0005576">
    <property type="term" value="C:extracellular region"/>
    <property type="evidence" value="ECO:0007669"/>
    <property type="project" value="UniProtKB-SubCell"/>
</dbReference>
<dbReference type="GO" id="GO:0008200">
    <property type="term" value="F:ion channel inhibitor activity"/>
    <property type="evidence" value="ECO:0007669"/>
    <property type="project" value="InterPro"/>
</dbReference>
<dbReference type="GO" id="GO:0090729">
    <property type="term" value="F:toxin activity"/>
    <property type="evidence" value="ECO:0007669"/>
    <property type="project" value="UniProtKB-KW"/>
</dbReference>
<dbReference type="InterPro" id="IPR011696">
    <property type="entry name" value="Huwentoxin-1"/>
</dbReference>
<dbReference type="Pfam" id="PF07740">
    <property type="entry name" value="Toxin_12"/>
    <property type="match status" value="1"/>
</dbReference>
<comment type="function">
    <text>Probable ion channel inhibitor.</text>
</comment>
<comment type="subcellular location">
    <subcellularLocation>
        <location evidence="1">Secreted</location>
    </subcellularLocation>
</comment>
<comment type="tissue specificity">
    <text>Expressed by the venom gland.</text>
</comment>
<comment type="domain">
    <text evidence="1">The presence of a 'disulfide through disulfide knot' structurally defines this protein as a knottin.</text>
</comment>
<comment type="similarity">
    <text evidence="3">Belongs to the neurotoxin 10 (Hwtx-1) family. 30 (Jztx-14) subfamily.</text>
</comment>
<protein>
    <recommendedName>
        <fullName>U8-theraphotoxin-Cg1a 1</fullName>
        <shortName>U8-TRTX-Cg1a</shortName>
    </recommendedName>
    <alternativeName>
        <fullName>Jingzhaotoxin-14.1</fullName>
        <shortName>JZTX-14.1</shortName>
    </alternativeName>
</protein>
<feature type="signal peptide" evidence="2">
    <location>
        <begin position="1"/>
        <end position="21"/>
    </location>
</feature>
<feature type="propeptide" id="PRO_0000398427" evidence="1">
    <location>
        <begin position="22"/>
        <end position="29"/>
    </location>
</feature>
<feature type="peptide" id="PRO_0000398428" description="U8-theraphotoxin-Cg1a 1">
    <location>
        <begin position="30"/>
        <end position="62"/>
    </location>
</feature>
<feature type="disulfide bond" evidence="1">
    <location>
        <begin position="31"/>
        <end position="46"/>
    </location>
</feature>
<feature type="disulfide bond" evidence="1">
    <location>
        <begin position="38"/>
        <end position="51"/>
    </location>
</feature>
<feature type="disulfide bond" evidence="1">
    <location>
        <begin position="45"/>
        <end position="58"/>
    </location>
</feature>
<name>JZ14B_CHIGU</name>
<accession>B1P1C1</accession>
<keyword id="KW-1015">Disulfide bond</keyword>
<keyword id="KW-0872">Ion channel impairing toxin</keyword>
<keyword id="KW-0960">Knottin</keyword>
<keyword id="KW-0964">Secreted</keyword>
<keyword id="KW-0732">Signal</keyword>
<keyword id="KW-0800">Toxin</keyword>
<sequence>MKTLVLFIIFGLAALFLLSSANELEETERGCQKFFWTCHPGQPPCCSGLACTWPTEICILGR</sequence>
<organism>
    <name type="scientific">Chilobrachys guangxiensis</name>
    <name type="common">Chinese earth tiger tarantula</name>
    <name type="synonym">Chilobrachys jingzhao</name>
    <dbReference type="NCBI Taxonomy" id="278060"/>
    <lineage>
        <taxon>Eukaryota</taxon>
        <taxon>Metazoa</taxon>
        <taxon>Ecdysozoa</taxon>
        <taxon>Arthropoda</taxon>
        <taxon>Chelicerata</taxon>
        <taxon>Arachnida</taxon>
        <taxon>Araneae</taxon>
        <taxon>Mygalomorphae</taxon>
        <taxon>Theraphosidae</taxon>
        <taxon>Chilobrachys</taxon>
    </lineage>
</organism>
<proteinExistence type="evidence at transcript level"/>